<accession>P09192</accession>
<comment type="function">
    <text evidence="1 3">Photosystem II (PSII) is a light-driven water:plastoquinone oxidoreductase that uses light energy to abstract electrons from H(2)O, generating O(2) and a proton gradient subsequently used for ATP formation. It consists of a core antenna complex that captures photons, and an electron transfer chain that converts photonic excitation into a charge separation. The D1/D2 (PsbA/PsbD) reaction center heterodimer binds P680, the primary electron donor of PSII as well as several subsequent electron acceptors. D2 is needed for assembly of a stable PSII complex.</text>
</comment>
<comment type="catalytic activity">
    <reaction evidence="1">
        <text>2 a plastoquinone + 4 hnu + 2 H2O = 2 a plastoquinol + O2</text>
        <dbReference type="Rhea" id="RHEA:36359"/>
        <dbReference type="Rhea" id="RHEA-COMP:9561"/>
        <dbReference type="Rhea" id="RHEA-COMP:9562"/>
        <dbReference type="ChEBI" id="CHEBI:15377"/>
        <dbReference type="ChEBI" id="CHEBI:15379"/>
        <dbReference type="ChEBI" id="CHEBI:17757"/>
        <dbReference type="ChEBI" id="CHEBI:30212"/>
        <dbReference type="ChEBI" id="CHEBI:62192"/>
        <dbReference type="EC" id="1.10.3.9"/>
    </reaction>
</comment>
<comment type="cofactor">
    <text evidence="1 3">The D1/D2 heterodimer binds P680, chlorophylls that are the primary electron donor of PSII, and subsequent electron acceptors. It shares a non-heme iron and each subunit binds pheophytin, quinone, additional chlorophylls, carotenoids and lipids. There is also a Cl(-1) ion associated with D1 and D2, which is required for oxygen evolution. The PSII complex binds additional chlorophylls, carotenoids and specific lipids.</text>
</comment>
<comment type="subunit">
    <text evidence="1 2 3">PSII is composed of 1 copy each of membrane proteins PsbA, PsbB, PsbC, PsbD, PsbE, PsbF, PsbH, PsbI, PsbJ, PsbK, PsbL, PsbM, PsbT, PsbX, PsbY, PsbZ, Psb30/Ycf12, peripheral proteins PsbO, CyanoQ (PsbQ), PsbU, PsbV and a large number of cofactors. It forms dimeric complexes.</text>
</comment>
<comment type="subcellular location">
    <subcellularLocation>
        <location evidence="1 2 3 4">Cellular thylakoid membrane</location>
        <topology evidence="1 3">Multi-pass membrane protein</topology>
    </subcellularLocation>
</comment>
<comment type="miscellaneous">
    <text evidence="1">2 of the reaction center chlorophylls (ChlD1 and ChlD2) are entirely coordinated by water.</text>
</comment>
<comment type="similarity">
    <text evidence="1">Belongs to the reaction center PufL/M/PsbA/D family.</text>
</comment>
<feature type="chain" id="PRO_0000090527" description="Photosystem II D2 protein">
    <location>
        <begin position="1"/>
        <end position="352"/>
    </location>
</feature>
<feature type="topological domain" description="Cytoplasmic" evidence="3 5">
    <location>
        <begin position="1"/>
        <end position="31"/>
    </location>
</feature>
<feature type="transmembrane region" description="Helical" evidence="3 5">
    <location>
        <begin position="32"/>
        <end position="53"/>
    </location>
</feature>
<feature type="topological domain" description="Lumenal, thylakoid" evidence="3 5">
    <location>
        <begin position="54"/>
        <end position="108"/>
    </location>
</feature>
<feature type="transmembrane region" description="Helical" evidence="3 5">
    <location>
        <begin position="109"/>
        <end position="131"/>
    </location>
</feature>
<feature type="topological domain" description="Cytoplasmic" evidence="3 5">
    <location>
        <begin position="132"/>
        <end position="140"/>
    </location>
</feature>
<feature type="transmembrane region" description="Helical" evidence="3 5">
    <location>
        <begin position="141"/>
        <end position="162"/>
    </location>
</feature>
<feature type="topological domain" description="Lumenal, thylakoid" evidence="3 5">
    <location>
        <begin position="163"/>
        <end position="190"/>
    </location>
</feature>
<feature type="transmembrane region" description="Helical" evidence="3 5">
    <location>
        <begin position="191"/>
        <end position="217"/>
    </location>
</feature>
<feature type="topological domain" description="Cytoplasmic" evidence="3 5">
    <location>
        <begin position="218"/>
        <end position="265"/>
    </location>
</feature>
<feature type="transmembrane region" description="Helical" evidence="3 5">
    <location>
        <begin position="266"/>
        <end position="288"/>
    </location>
</feature>
<feature type="topological domain" description="Lumenal, thylakoid" evidence="3 5">
    <location>
        <begin position="289"/>
        <end position="352"/>
    </location>
</feature>
<feature type="binding site" description="axial binding residue" evidence="1 3 5">
    <location>
        <position position="117"/>
    </location>
    <ligand>
        <name>chlorophyll a</name>
        <dbReference type="ChEBI" id="CHEBI:58416"/>
        <label>ChlzD2</label>
    </ligand>
    <ligandPart>
        <name>Mg</name>
        <dbReference type="ChEBI" id="CHEBI:25107"/>
    </ligandPart>
</feature>
<feature type="binding site" evidence="1 3 5">
    <location>
        <position position="129"/>
    </location>
    <ligand>
        <name>pheophytin a</name>
        <dbReference type="ChEBI" id="CHEBI:136840"/>
        <label>D2</label>
    </ligand>
</feature>
<feature type="binding site" evidence="1 3 5">
    <location>
        <position position="142"/>
    </location>
    <ligand>
        <name>pheophytin a</name>
        <dbReference type="ChEBI" id="CHEBI:136840"/>
        <label>D2</label>
    </ligand>
</feature>
<feature type="binding site" description="axial binding residue" evidence="1 3 5">
    <location>
        <position position="197"/>
    </location>
    <ligand>
        <name>chlorophyll a</name>
        <dbReference type="ChEBI" id="CHEBI:58416"/>
        <label>PD2</label>
    </ligand>
    <ligandPart>
        <name>Mg</name>
        <dbReference type="ChEBI" id="CHEBI:25107"/>
    </ligandPart>
</feature>
<feature type="binding site" evidence="1 3 5">
    <location>
        <position position="214"/>
    </location>
    <ligand>
        <name>a plastoquinone</name>
        <dbReference type="ChEBI" id="CHEBI:17757"/>
        <label>Q(A)</label>
    </ligand>
</feature>
<feature type="binding site" evidence="1 3 5">
    <location>
        <position position="214"/>
    </location>
    <ligand>
        <name>Fe cation</name>
        <dbReference type="ChEBI" id="CHEBI:24875"/>
        <note>ligand shared with heterodimeric partner</note>
    </ligand>
</feature>
<feature type="binding site" evidence="1 3 5">
    <location>
        <position position="261"/>
    </location>
    <ligand>
        <name>a plastoquinone</name>
        <dbReference type="ChEBI" id="CHEBI:17757"/>
        <label>Q(A)</label>
    </ligand>
</feature>
<feature type="binding site" evidence="1 3 5">
    <location>
        <position position="268"/>
    </location>
    <ligand>
        <name>Fe cation</name>
        <dbReference type="ChEBI" id="CHEBI:24875"/>
        <note>ligand shared with heterodimeric partner</note>
    </ligand>
</feature>
<feature type="helix" evidence="9">
    <location>
        <begin position="14"/>
        <end position="22"/>
    </location>
</feature>
<feature type="strand" evidence="8">
    <location>
        <begin position="26"/>
        <end position="28"/>
    </location>
</feature>
<feature type="helix" evidence="9">
    <location>
        <begin position="31"/>
        <end position="54"/>
    </location>
</feature>
<feature type="turn" evidence="9">
    <location>
        <begin position="58"/>
        <end position="60"/>
    </location>
</feature>
<feature type="strand" evidence="9">
    <location>
        <begin position="61"/>
        <end position="63"/>
    </location>
</feature>
<feature type="helix" evidence="9">
    <location>
        <begin position="67"/>
        <end position="69"/>
    </location>
</feature>
<feature type="turn" evidence="9">
    <location>
        <begin position="73"/>
        <end position="75"/>
    </location>
</feature>
<feature type="helix" evidence="9">
    <location>
        <begin position="83"/>
        <end position="85"/>
    </location>
</feature>
<feature type="strand" evidence="10">
    <location>
        <begin position="92"/>
        <end position="94"/>
    </location>
</feature>
<feature type="turn" evidence="9">
    <location>
        <begin position="95"/>
        <end position="99"/>
    </location>
</feature>
<feature type="helix" evidence="9">
    <location>
        <begin position="101"/>
        <end position="106"/>
    </location>
</feature>
<feature type="turn" evidence="9">
    <location>
        <begin position="107"/>
        <end position="109"/>
    </location>
</feature>
<feature type="helix" evidence="9">
    <location>
        <begin position="110"/>
        <end position="136"/>
    </location>
</feature>
<feature type="helix" evidence="9">
    <location>
        <begin position="141"/>
        <end position="157"/>
    </location>
</feature>
<feature type="helix" evidence="9">
    <location>
        <begin position="159"/>
        <end position="163"/>
    </location>
</feature>
<feature type="strand" evidence="9">
    <location>
        <begin position="164"/>
        <end position="166"/>
    </location>
</feature>
<feature type="helix" evidence="9">
    <location>
        <begin position="167"/>
        <end position="169"/>
    </location>
</feature>
<feature type="helix" evidence="9">
    <location>
        <begin position="175"/>
        <end position="189"/>
    </location>
</feature>
<feature type="helix" evidence="9">
    <location>
        <begin position="191"/>
        <end position="193"/>
    </location>
</feature>
<feature type="helix" evidence="9">
    <location>
        <begin position="195"/>
        <end position="220"/>
    </location>
</feature>
<feature type="strand" evidence="9">
    <location>
        <begin position="221"/>
        <end position="223"/>
    </location>
</feature>
<feature type="strand" evidence="9">
    <location>
        <begin position="227"/>
        <end position="229"/>
    </location>
</feature>
<feature type="helix" evidence="9">
    <location>
        <begin position="231"/>
        <end position="234"/>
    </location>
</feature>
<feature type="helix" evidence="9">
    <location>
        <begin position="246"/>
        <end position="257"/>
    </location>
</feature>
<feature type="helix" evidence="9">
    <location>
        <begin position="264"/>
        <end position="290"/>
    </location>
</feature>
<feature type="helix" evidence="9">
    <location>
        <begin position="299"/>
        <end position="307"/>
    </location>
</feature>
<feature type="helix" evidence="9">
    <location>
        <begin position="314"/>
        <end position="333"/>
    </location>
</feature>
<feature type="helix" evidence="9">
    <location>
        <begin position="335"/>
        <end position="337"/>
    </location>
</feature>
<feature type="helix" evidence="9">
    <location>
        <begin position="343"/>
        <end position="345"/>
    </location>
</feature>
<feature type="helix" evidence="8">
    <location>
        <begin position="349"/>
        <end position="351"/>
    </location>
</feature>
<proteinExistence type="evidence at protein level"/>
<keyword id="KW-0002">3D-structure</keyword>
<keyword id="KW-0148">Chlorophyll</keyword>
<keyword id="KW-0157">Chromophore</keyword>
<keyword id="KW-0249">Electron transport</keyword>
<keyword id="KW-0408">Iron</keyword>
<keyword id="KW-0460">Magnesium</keyword>
<keyword id="KW-0472">Membrane</keyword>
<keyword id="KW-0479">Metal-binding</keyword>
<keyword id="KW-0560">Oxidoreductase</keyword>
<keyword id="KW-0602">Photosynthesis</keyword>
<keyword id="KW-0604">Photosystem II</keyword>
<keyword id="KW-1185">Reference proteome</keyword>
<keyword id="KW-0793">Thylakoid</keyword>
<keyword id="KW-0812">Transmembrane</keyword>
<keyword id="KW-1133">Transmembrane helix</keyword>
<keyword id="KW-0813">Transport</keyword>
<reference key="1">
    <citation type="journal article" date="1988" name="Plant Mol. Biol.">
        <title>Nucleotide sequence of psbC, the gene encoding the CP-43 chlorophyll a-binding protein of photosystem II, in the cyanobacterium Synechocystis 6803.</title>
        <authorList>
            <person name="Chisholm D."/>
            <person name="Williams J.G.K."/>
        </authorList>
    </citation>
    <scope>NUCLEOTIDE SEQUENCE [GENOMIC DNA]</scope>
    <source>
        <strain>ATCC 27184 / PCC 6803 / Kazusa</strain>
    </source>
</reference>
<reference key="2">
    <citation type="journal article" date="1995" name="DNA Res.">
        <title>Sequence analysis of the genome of the unicellular cyanobacterium Synechocystis sp. strain PCC6803. I. Sequence features in the 1 Mb region from map positions 64% to 92% of the genome.</title>
        <authorList>
            <person name="Kaneko T."/>
            <person name="Tanaka A."/>
            <person name="Sato S."/>
            <person name="Kotani H."/>
            <person name="Sazuka T."/>
            <person name="Miyajima N."/>
            <person name="Sugiura M."/>
            <person name="Tabata S."/>
        </authorList>
    </citation>
    <scope>NUCLEOTIDE SEQUENCE [LARGE SCALE GENOMIC DNA]</scope>
    <source>
        <strain>ATCC 27184 / PCC 6803 / N-1</strain>
    </source>
</reference>
<reference key="3">
    <citation type="journal article" date="1996" name="DNA Res.">
        <title>Sequence analysis of the genome of the unicellular cyanobacterium Synechocystis sp. strain PCC6803. II. Sequence determination of the entire genome and assignment of potential protein-coding regions.</title>
        <authorList>
            <person name="Kaneko T."/>
            <person name="Sato S."/>
            <person name="Kotani H."/>
            <person name="Tanaka A."/>
            <person name="Asamizu E."/>
            <person name="Nakamura Y."/>
            <person name="Miyajima N."/>
            <person name="Hirosawa M."/>
            <person name="Sugiura M."/>
            <person name="Sasamoto S."/>
            <person name="Kimura T."/>
            <person name="Hosouchi T."/>
            <person name="Matsuno A."/>
            <person name="Muraki A."/>
            <person name="Nakazaki N."/>
            <person name="Naruo K."/>
            <person name="Okumura S."/>
            <person name="Shimpo S."/>
            <person name="Takeuchi C."/>
            <person name="Wada T."/>
            <person name="Watanabe A."/>
            <person name="Yamada M."/>
            <person name="Yasuda M."/>
            <person name="Tabata S."/>
        </authorList>
    </citation>
    <scope>NUCLEOTIDE SEQUENCE [LARGE SCALE GENOMIC DNA]</scope>
    <source>
        <strain>ATCC 27184 / PCC 6803 / Kazusa</strain>
    </source>
</reference>
<reference key="4">
    <citation type="journal article" date="1988" name="EMBO J.">
        <title>Molecular analysis of a mutant defective in photosynthetic oxygen evolution and isolation of a complementing clone by a novel screening procedure.</title>
        <authorList>
            <person name="Dzelzkalns V.A."/>
            <person name="Bogorad L."/>
        </authorList>
    </citation>
    <scope>NUCLEOTIDE SEQUENCE [GENOMIC DNA] OF 230-352</scope>
</reference>
<reference key="5">
    <citation type="journal article" date="1990" name="FEBS Lett.">
        <title>The psbC start codon in Synechocystis sp. PCC 6803.</title>
        <authorList>
            <person name="Carpenter S.D."/>
            <person name="Charite J."/>
            <person name="Eggers B."/>
            <person name="Vermaas W.F."/>
        </authorList>
    </citation>
    <scope>NUCLEOTIDE SEQUENCE [GENOMIC DNA] OF 332-352</scope>
</reference>
<reference key="6">
    <citation type="journal article" date="1998" name="FEBS Lett.">
        <title>Thylakoid protein phosphorylation in evolutionally divergent species with oxygenic photosynthesis.</title>
        <authorList>
            <person name="Pursiheimo S."/>
            <person name="Rintamaeki E."/>
            <person name="Baena-Gonzalez E."/>
            <person name="Aro E.-M."/>
        </authorList>
    </citation>
    <scope>SUBCELLULAR LOCATION</scope>
    <scope>LACK OF PHOSPHORYLATION</scope>
    <source>
        <strain>ATCC 27184 / PCC 6803 / Kazusa</strain>
    </source>
</reference>
<reference key="7">
    <citation type="journal article" date="2002" name="Biochemistry">
        <title>Proteomic analysis of a highly active photosystem II preparation from the cyanobacterium Synechocystis sp. PCC 6803 reveals the presence of novel polypeptides.</title>
        <authorList>
            <person name="Kashino Y."/>
            <person name="Lauber W.M."/>
            <person name="Carroll J.A."/>
            <person name="Wang Q."/>
            <person name="Whitmarsh J."/>
            <person name="Satoh K."/>
            <person name="Pakrasi H.B."/>
        </authorList>
    </citation>
    <scope>IDENTIFICATION BY MASS SPECTROMETRY</scope>
    <scope>SUBUNIT</scope>
    <scope>SUBCELLULAR LOCATION</scope>
    <source>
        <strain>ATCC 27184 / PCC 6803 / Kazusa</strain>
    </source>
</reference>
<reference evidence="6 7" key="8">
    <citation type="journal article" date="2022" name="Proc. Natl. Acad. Sci. U.S.A.">
        <title>High-resolution cryo-electron microscopy structure of photosystem II from the mesophilic cyanobacterium, Synechocystis sp. PCC 6803.</title>
        <authorList>
            <person name="Gisriel C.J."/>
            <person name="Wang J."/>
            <person name="Liu J."/>
            <person name="Flesher D.A."/>
            <person name="Reiss K.M."/>
            <person name="Huang H.L."/>
            <person name="Yang K.R."/>
            <person name="Armstrong W.H."/>
            <person name="Gunner M.R."/>
            <person name="Batista V.S."/>
            <person name="Debus R.J."/>
            <person name="Brudvig G.W."/>
        </authorList>
    </citation>
    <scope>STRUCTURE BY ELECTRON MICROSCOPY (1.93 ANGSTROMS) OF 12-352</scope>
    <scope>FUNCTION</scope>
    <scope>COFACTOR</scope>
    <scope>SUBUNIT</scope>
    <scope>SUBCELLULAR LOCATION</scope>
    <scope>TOPOLOGY</scope>
    <source>
        <strain>ATCC 27184 / PCC 6803 / Kazusa</strain>
    </source>
</reference>
<dbReference type="EC" id="1.10.3.9" evidence="1"/>
<dbReference type="EMBL" id="M21538">
    <property type="protein sequence ID" value="AAA85377.1"/>
    <property type="molecule type" value="Genomic_DNA"/>
</dbReference>
<dbReference type="EMBL" id="BA000022">
    <property type="protein sequence ID" value="BAA10851.1"/>
    <property type="molecule type" value="Genomic_DNA"/>
</dbReference>
<dbReference type="EMBL" id="BA000022">
    <property type="protein sequence ID" value="BAA17800.1"/>
    <property type="molecule type" value="Genomic_DNA"/>
</dbReference>
<dbReference type="EMBL" id="X07018">
    <property type="protein sequence ID" value="CAA30070.1"/>
    <property type="molecule type" value="Genomic_DNA"/>
</dbReference>
<dbReference type="PIR" id="PS0097">
    <property type="entry name" value="PS0097"/>
</dbReference>
<dbReference type="PDB" id="6WJ6">
    <property type="method" value="EM"/>
    <property type="resolution" value="2.58 A"/>
    <property type="chains" value="D=1-352"/>
</dbReference>
<dbReference type="PDB" id="7N8O">
    <property type="method" value="EM"/>
    <property type="resolution" value="1.93 A"/>
    <property type="chains" value="D/d=12-352"/>
</dbReference>
<dbReference type="PDB" id="7RCV">
    <property type="method" value="EM"/>
    <property type="resolution" value="2.01 A"/>
    <property type="chains" value="D/d=12-352"/>
</dbReference>
<dbReference type="PDB" id="8AM5">
    <property type="method" value="EM"/>
    <property type="resolution" value="3.10 A"/>
    <property type="chains" value="D=2-330"/>
</dbReference>
<dbReference type="PDB" id="8ASL">
    <property type="method" value="EM"/>
    <property type="resolution" value="3.15 A"/>
    <property type="chains" value="D=2-330"/>
</dbReference>
<dbReference type="PDB" id="8TOW">
    <property type="method" value="EM"/>
    <property type="resolution" value="2.14 A"/>
    <property type="chains" value="D/d=1-352"/>
</dbReference>
<dbReference type="PDB" id="9EH5">
    <property type="method" value="EM"/>
    <property type="resolution" value="1.97 A"/>
    <property type="chains" value="D/d=1-352"/>
</dbReference>
<dbReference type="PDBsum" id="6WJ6"/>
<dbReference type="PDBsum" id="7N8O"/>
<dbReference type="PDBsum" id="7RCV"/>
<dbReference type="PDBsum" id="8AM5"/>
<dbReference type="PDBsum" id="8ASL"/>
<dbReference type="PDBsum" id="8TOW"/>
<dbReference type="PDBsum" id="9EH5"/>
<dbReference type="EMDB" id="EMD-15522"/>
<dbReference type="EMDB" id="EMD-15618"/>
<dbReference type="EMDB" id="EMD-21690"/>
<dbReference type="EMDB" id="EMD-24239"/>
<dbReference type="EMDB" id="EMD-24407"/>
<dbReference type="EMDB" id="EMD-41460"/>
<dbReference type="EMDB" id="EMD-48046"/>
<dbReference type="SMR" id="P09192"/>
<dbReference type="IntAct" id="P09192">
    <property type="interactions" value="2"/>
</dbReference>
<dbReference type="STRING" id="1148.gene:10498668"/>
<dbReference type="TCDB" id="3.E.2.2.2">
    <property type="family name" value="the photosynthetic reaction center (prc) family"/>
</dbReference>
<dbReference type="PaxDb" id="1148-1001364"/>
<dbReference type="EnsemblBacteria" id="BAA10851">
    <property type="protein sequence ID" value="BAA10851"/>
    <property type="gene ID" value="BAA10851"/>
</dbReference>
<dbReference type="EnsemblBacteria" id="BAA17800">
    <property type="protein sequence ID" value="BAA17800"/>
    <property type="gene ID" value="BAA17800"/>
</dbReference>
<dbReference type="KEGG" id="syn:sll0849"/>
<dbReference type="KEGG" id="syn:slr0927"/>
<dbReference type="eggNOG" id="ENOG502Z8JK">
    <property type="taxonomic scope" value="Bacteria"/>
</dbReference>
<dbReference type="InParanoid" id="P09192"/>
<dbReference type="PhylomeDB" id="P09192"/>
<dbReference type="BioCyc" id="MetaCyc:PSBD-MONOMER"/>
<dbReference type="Proteomes" id="UP000001425">
    <property type="component" value="Chromosome"/>
</dbReference>
<dbReference type="GO" id="GO:0009523">
    <property type="term" value="C:photosystem II"/>
    <property type="evidence" value="ECO:0000318"/>
    <property type="project" value="GO_Central"/>
</dbReference>
<dbReference type="GO" id="GO:0031676">
    <property type="term" value="C:plasma membrane-derived thylakoid membrane"/>
    <property type="evidence" value="ECO:0007669"/>
    <property type="project" value="UniProtKB-SubCell"/>
</dbReference>
<dbReference type="GO" id="GO:0030096">
    <property type="term" value="C:plasma membrane-derived thylakoid photosystem II"/>
    <property type="evidence" value="ECO:0000314"/>
    <property type="project" value="UniProtKB"/>
</dbReference>
<dbReference type="GO" id="GO:0016168">
    <property type="term" value="F:chlorophyll binding"/>
    <property type="evidence" value="ECO:0007669"/>
    <property type="project" value="UniProtKB-UniRule"/>
</dbReference>
<dbReference type="GO" id="GO:0045156">
    <property type="term" value="F:electron transporter, transferring electrons within the cyclic electron transport pathway of photosynthesis activity"/>
    <property type="evidence" value="ECO:0007669"/>
    <property type="project" value="InterPro"/>
</dbReference>
<dbReference type="GO" id="GO:0005506">
    <property type="term" value="F:iron ion binding"/>
    <property type="evidence" value="ECO:0007669"/>
    <property type="project" value="UniProtKB-UniRule"/>
</dbReference>
<dbReference type="GO" id="GO:0010242">
    <property type="term" value="F:oxygen evolving activity"/>
    <property type="evidence" value="ECO:0007669"/>
    <property type="project" value="UniProtKB-EC"/>
</dbReference>
<dbReference type="GO" id="GO:0009772">
    <property type="term" value="P:photosynthetic electron transport in photosystem II"/>
    <property type="evidence" value="ECO:0007669"/>
    <property type="project" value="InterPro"/>
</dbReference>
<dbReference type="FunFam" id="1.20.85.10:FF:000001">
    <property type="entry name" value="photosystem II D2 protein-like"/>
    <property type="match status" value="1"/>
</dbReference>
<dbReference type="Gene3D" id="1.20.85.10">
    <property type="entry name" value="Photosystem II protein D1-like"/>
    <property type="match status" value="1"/>
</dbReference>
<dbReference type="HAMAP" id="MF_01383">
    <property type="entry name" value="PSII_PsbD_D2"/>
    <property type="match status" value="1"/>
</dbReference>
<dbReference type="InterPro" id="IPR055266">
    <property type="entry name" value="D1/D2"/>
</dbReference>
<dbReference type="InterPro" id="IPR036854">
    <property type="entry name" value="Photo_II_D1/D2_sf"/>
</dbReference>
<dbReference type="InterPro" id="IPR000484">
    <property type="entry name" value="Photo_RC_L/M"/>
</dbReference>
<dbReference type="InterPro" id="IPR055265">
    <property type="entry name" value="Photo_RC_L/M_CS"/>
</dbReference>
<dbReference type="InterPro" id="IPR005868">
    <property type="entry name" value="PSII_PsbD/D2"/>
</dbReference>
<dbReference type="NCBIfam" id="TIGR01152">
    <property type="entry name" value="psbD"/>
    <property type="match status" value="1"/>
</dbReference>
<dbReference type="PANTHER" id="PTHR33149:SF12">
    <property type="entry name" value="PHOTOSYSTEM II D2 PROTEIN"/>
    <property type="match status" value="1"/>
</dbReference>
<dbReference type="PANTHER" id="PTHR33149">
    <property type="entry name" value="PHOTOSYSTEM II PROTEIN D1"/>
    <property type="match status" value="1"/>
</dbReference>
<dbReference type="Pfam" id="PF00124">
    <property type="entry name" value="Photo_RC"/>
    <property type="match status" value="1"/>
</dbReference>
<dbReference type="PRINTS" id="PR00256">
    <property type="entry name" value="REACTNCENTRE"/>
</dbReference>
<dbReference type="SUPFAM" id="SSF81483">
    <property type="entry name" value="Bacterial photosystem II reaction centre, L and M subunits"/>
    <property type="match status" value="1"/>
</dbReference>
<dbReference type="PROSITE" id="PS00244">
    <property type="entry name" value="REACTION_CENTER"/>
    <property type="match status" value="1"/>
</dbReference>
<evidence type="ECO:0000255" key="1">
    <source>
        <dbReference type="HAMAP-Rule" id="MF_01383"/>
    </source>
</evidence>
<evidence type="ECO:0000269" key="2">
    <source>
    </source>
</evidence>
<evidence type="ECO:0000269" key="3">
    <source>
    </source>
</evidence>
<evidence type="ECO:0000269" key="4">
    <source>
    </source>
</evidence>
<evidence type="ECO:0000312" key="5">
    <source>
        <dbReference type="PDB" id="7N8O"/>
    </source>
</evidence>
<evidence type="ECO:0007744" key="6">
    <source>
        <dbReference type="PDB" id="7N8O"/>
    </source>
</evidence>
<evidence type="ECO:0007744" key="7">
    <source>
        <dbReference type="PDB" id="7RCV"/>
    </source>
</evidence>
<evidence type="ECO:0007829" key="8">
    <source>
        <dbReference type="PDB" id="6WJ6"/>
    </source>
</evidence>
<evidence type="ECO:0007829" key="9">
    <source>
        <dbReference type="PDB" id="7N8O"/>
    </source>
</evidence>
<evidence type="ECO:0007829" key="10">
    <source>
        <dbReference type="PDB" id="8ASL"/>
    </source>
</evidence>
<protein>
    <recommendedName>
        <fullName evidence="1">Photosystem II D2 protein</fullName>
        <shortName evidence="1">PSII D2 protein</shortName>
        <ecNumber evidence="1">1.10.3.9</ecNumber>
    </recommendedName>
    <alternativeName>
        <fullName evidence="1">Photosystem Q(A) protein</fullName>
    </alternativeName>
</protein>
<name>PSBD_SYNY3</name>
<gene>
    <name evidence="1" type="primary">psbD</name>
    <name type="ordered locus">sll0849</name>
</gene>
<sequence length="352" mass="39493">MTIAVGRAPVERGWFDVLDDWLKRDRFVFIGWSGLLLFPCAFMALGGWLTGTTFVTSWYTHGLASSYLEGANFLTVAVSSPADAFGHSLLFLWGPEAQGNLTRWFQIGGLWPFVALHGAFGLIGFMLRQFEISRLVGIRPYNAIAFSGPIAVFVSVFLMYPLGQSSWFFAPSFGVAGIFRFILFLQGFHNWTLNPFHMMGVAGILGGALLCAIHGATVENTLFEDGEDSNTFRAFEPTQAEETYSMVTANRFWSQIFGIAFSNKRWLHFFMLFVPVTGLWMSSVGIVGLALNLRAYDFVSQELRAAEDPEFETFYTKNILLNEGMRAWMAPQDQPHENFIFPEEVLPRGNAL</sequence>
<organism>
    <name type="scientific">Synechocystis sp. (strain ATCC 27184 / PCC 6803 / Kazusa)</name>
    <dbReference type="NCBI Taxonomy" id="1111708"/>
    <lineage>
        <taxon>Bacteria</taxon>
        <taxon>Bacillati</taxon>
        <taxon>Cyanobacteriota</taxon>
        <taxon>Cyanophyceae</taxon>
        <taxon>Synechococcales</taxon>
        <taxon>Merismopediaceae</taxon>
        <taxon>Synechocystis</taxon>
    </lineage>
</organism>